<proteinExistence type="inferred from homology"/>
<dbReference type="EC" id="2.3.1.274" evidence="1"/>
<dbReference type="EMBL" id="CP000114">
    <property type="protein sequence ID" value="ABA44425.1"/>
    <property type="molecule type" value="Genomic_DNA"/>
</dbReference>
<dbReference type="RefSeq" id="WP_000717412.1">
    <property type="nucleotide sequence ID" value="NC_007432.1"/>
</dbReference>
<dbReference type="SMR" id="Q3K405"/>
<dbReference type="KEGG" id="sak:SAK_0055"/>
<dbReference type="HOGENOM" id="CLU_039379_1_1_9"/>
<dbReference type="UniPathway" id="UPA00085"/>
<dbReference type="GO" id="GO:0005737">
    <property type="term" value="C:cytoplasm"/>
    <property type="evidence" value="ECO:0007669"/>
    <property type="project" value="UniProtKB-SubCell"/>
</dbReference>
<dbReference type="GO" id="GO:0043811">
    <property type="term" value="F:phosphate:acyl-[acyl carrier protein] acyltransferase activity"/>
    <property type="evidence" value="ECO:0007669"/>
    <property type="project" value="UniProtKB-UniRule"/>
</dbReference>
<dbReference type="GO" id="GO:0006633">
    <property type="term" value="P:fatty acid biosynthetic process"/>
    <property type="evidence" value="ECO:0007669"/>
    <property type="project" value="UniProtKB-UniRule"/>
</dbReference>
<dbReference type="GO" id="GO:0008654">
    <property type="term" value="P:phospholipid biosynthetic process"/>
    <property type="evidence" value="ECO:0007669"/>
    <property type="project" value="UniProtKB-KW"/>
</dbReference>
<dbReference type="Gene3D" id="3.40.718.10">
    <property type="entry name" value="Isopropylmalate Dehydrogenase"/>
    <property type="match status" value="1"/>
</dbReference>
<dbReference type="HAMAP" id="MF_00019">
    <property type="entry name" value="PlsX"/>
    <property type="match status" value="1"/>
</dbReference>
<dbReference type="InterPro" id="IPR003664">
    <property type="entry name" value="FA_synthesis"/>
</dbReference>
<dbReference type="InterPro" id="IPR012281">
    <property type="entry name" value="Phospholipid_synth_PlsX-like"/>
</dbReference>
<dbReference type="NCBIfam" id="TIGR00182">
    <property type="entry name" value="plsX"/>
    <property type="match status" value="1"/>
</dbReference>
<dbReference type="PANTHER" id="PTHR30100">
    <property type="entry name" value="FATTY ACID/PHOSPHOLIPID SYNTHESIS PROTEIN PLSX"/>
    <property type="match status" value="1"/>
</dbReference>
<dbReference type="PANTHER" id="PTHR30100:SF1">
    <property type="entry name" value="PHOSPHATE ACYLTRANSFERASE"/>
    <property type="match status" value="1"/>
</dbReference>
<dbReference type="Pfam" id="PF02504">
    <property type="entry name" value="FA_synthesis"/>
    <property type="match status" value="1"/>
</dbReference>
<dbReference type="PIRSF" id="PIRSF002465">
    <property type="entry name" value="Phsphlp_syn_PlsX"/>
    <property type="match status" value="1"/>
</dbReference>
<dbReference type="SUPFAM" id="SSF53659">
    <property type="entry name" value="Isocitrate/Isopropylmalate dehydrogenase-like"/>
    <property type="match status" value="1"/>
</dbReference>
<sequence length="330" mass="35100">MKKIAVDAMGGDYAPKAIVEGVNQAISDFSDIEVQLYGDQKKIEKYLTVTERVSIIHTEEKINSDDEPAKAVRRKKQSSMVLGAKAVKDGVAQAFISAGNTGALLAAGLFVVGRIKGVDRPGLMSTMPTLDGVGFDMLDLGANAENTASHLHQYAILGSFYAKNVRGIEIPRVGLLNNGTEETKGDSLHKEAYELLAAEPSINFIGNIEARDLMSSVADVVVTDGFTGNAVLKTMEGTAMSIMGSLKSSIKSGGVKAKLGALLLKDSLYQLKDNMDYSSAGGAVLFGLKAPIVKCHGSSDSKAVYSTLKQVRTMLETQVVDQLVDAFTDE</sequence>
<gene>
    <name evidence="1" type="primary">plsX</name>
    <name type="ordered locus">SAK_0055</name>
</gene>
<accession>Q3K405</accession>
<feature type="chain" id="PRO_1000001842" description="Phosphate acyltransferase">
    <location>
        <begin position="1"/>
        <end position="330"/>
    </location>
</feature>
<protein>
    <recommendedName>
        <fullName evidence="1">Phosphate acyltransferase</fullName>
        <ecNumber evidence="1">2.3.1.274</ecNumber>
    </recommendedName>
    <alternativeName>
        <fullName evidence="1">Acyl-ACP phosphotransacylase</fullName>
    </alternativeName>
    <alternativeName>
        <fullName evidence="1">Acyl-[acyl-carrier-protein]--phosphate acyltransferase</fullName>
    </alternativeName>
    <alternativeName>
        <fullName evidence="1">Phosphate-acyl-ACP acyltransferase</fullName>
    </alternativeName>
</protein>
<reference key="1">
    <citation type="journal article" date="2005" name="Proc. Natl. Acad. Sci. U.S.A.">
        <title>Genome analysis of multiple pathogenic isolates of Streptococcus agalactiae: implications for the microbial 'pan-genome'.</title>
        <authorList>
            <person name="Tettelin H."/>
            <person name="Masignani V."/>
            <person name="Cieslewicz M.J."/>
            <person name="Donati C."/>
            <person name="Medini D."/>
            <person name="Ward N.L."/>
            <person name="Angiuoli S.V."/>
            <person name="Crabtree J."/>
            <person name="Jones A.L."/>
            <person name="Durkin A.S."/>
            <person name="DeBoy R.T."/>
            <person name="Davidsen T.M."/>
            <person name="Mora M."/>
            <person name="Scarselli M."/>
            <person name="Margarit y Ros I."/>
            <person name="Peterson J.D."/>
            <person name="Hauser C.R."/>
            <person name="Sundaram J.P."/>
            <person name="Nelson W.C."/>
            <person name="Madupu R."/>
            <person name="Brinkac L.M."/>
            <person name="Dodson R.J."/>
            <person name="Rosovitz M.J."/>
            <person name="Sullivan S.A."/>
            <person name="Daugherty S.C."/>
            <person name="Haft D.H."/>
            <person name="Selengut J."/>
            <person name="Gwinn M.L."/>
            <person name="Zhou L."/>
            <person name="Zafar N."/>
            <person name="Khouri H."/>
            <person name="Radune D."/>
            <person name="Dimitrov G."/>
            <person name="Watkins K."/>
            <person name="O'Connor K.J."/>
            <person name="Smith S."/>
            <person name="Utterback T.R."/>
            <person name="White O."/>
            <person name="Rubens C.E."/>
            <person name="Grandi G."/>
            <person name="Madoff L.C."/>
            <person name="Kasper D.L."/>
            <person name="Telford J.L."/>
            <person name="Wessels M.R."/>
            <person name="Rappuoli R."/>
            <person name="Fraser C.M."/>
        </authorList>
    </citation>
    <scope>NUCLEOTIDE SEQUENCE [LARGE SCALE GENOMIC DNA]</scope>
    <source>
        <strain>ATCC 27591 / A909 / CDC SS700</strain>
    </source>
</reference>
<organism>
    <name type="scientific">Streptococcus agalactiae serotype Ia (strain ATCC 27591 / A909 / CDC SS700)</name>
    <dbReference type="NCBI Taxonomy" id="205921"/>
    <lineage>
        <taxon>Bacteria</taxon>
        <taxon>Bacillati</taxon>
        <taxon>Bacillota</taxon>
        <taxon>Bacilli</taxon>
        <taxon>Lactobacillales</taxon>
        <taxon>Streptococcaceae</taxon>
        <taxon>Streptococcus</taxon>
    </lineage>
</organism>
<keyword id="KW-0963">Cytoplasm</keyword>
<keyword id="KW-0444">Lipid biosynthesis</keyword>
<keyword id="KW-0443">Lipid metabolism</keyword>
<keyword id="KW-0594">Phospholipid biosynthesis</keyword>
<keyword id="KW-1208">Phospholipid metabolism</keyword>
<keyword id="KW-0808">Transferase</keyword>
<comment type="function">
    <text evidence="1">Catalyzes the reversible formation of acyl-phosphate (acyl-PO(4)) from acyl-[acyl-carrier-protein] (acyl-ACP). This enzyme utilizes acyl-ACP as fatty acyl donor, but not acyl-CoA.</text>
</comment>
<comment type="catalytic activity">
    <reaction evidence="1">
        <text>a fatty acyl-[ACP] + phosphate = an acyl phosphate + holo-[ACP]</text>
        <dbReference type="Rhea" id="RHEA:42292"/>
        <dbReference type="Rhea" id="RHEA-COMP:9685"/>
        <dbReference type="Rhea" id="RHEA-COMP:14125"/>
        <dbReference type="ChEBI" id="CHEBI:43474"/>
        <dbReference type="ChEBI" id="CHEBI:59918"/>
        <dbReference type="ChEBI" id="CHEBI:64479"/>
        <dbReference type="ChEBI" id="CHEBI:138651"/>
        <dbReference type="EC" id="2.3.1.274"/>
    </reaction>
</comment>
<comment type="pathway">
    <text evidence="1">Lipid metabolism; phospholipid metabolism.</text>
</comment>
<comment type="subunit">
    <text evidence="1">Homodimer. Probably interacts with PlsY.</text>
</comment>
<comment type="subcellular location">
    <subcellularLocation>
        <location evidence="1">Cytoplasm</location>
    </subcellularLocation>
    <text evidence="1">Associated with the membrane possibly through PlsY.</text>
</comment>
<comment type="similarity">
    <text evidence="1">Belongs to the PlsX family.</text>
</comment>
<name>PLSX_STRA1</name>
<evidence type="ECO:0000255" key="1">
    <source>
        <dbReference type="HAMAP-Rule" id="MF_00019"/>
    </source>
</evidence>